<protein>
    <recommendedName>
        <fullName>SPARC</fullName>
    </recommendedName>
    <alternativeName>
        <fullName>Basement-membrane protein 40</fullName>
        <shortName>BM-40</shortName>
    </alternativeName>
    <alternativeName>
        <fullName>Osteonectin</fullName>
        <shortName>ON</shortName>
    </alternativeName>
    <alternativeName>
        <fullName>Secreted protein acidic and rich in cysteine</fullName>
    </alternativeName>
</protein>
<gene>
    <name type="primary">sparc</name>
</gene>
<sequence length="300" mass="34596">MRVWVFFVLCLAGKALAAPQQDALPEEEEVIEDVPAEETVGTNPVQVDVGEFDEAINEEEEEEPSENPCLNHHCKHGKVCEVDESNTPLCVCQDPSTCPTSVGEFEKICGTDNKTYDSSCHFFATKCTLEGTKKGHKLHLDYIGPCKYIAPCLDNELSEFPLRIGDWLKNVLVSLYERDENNNLLNEKQKLRVKKIHENEKRLESWRPHSELLVRDFEKNYNMYIFPVHWQFGQLDQHPIDGYLSHTELSPLRAPLIPMEHCTTRFFDECDIDDDKYIALEEWAKCFGIKEQDVDKDMIV</sequence>
<feature type="signal peptide" evidence="1">
    <location>
        <begin position="1"/>
        <end position="17"/>
    </location>
</feature>
<feature type="chain" id="PRO_0000020310" description="SPARC">
    <location>
        <begin position="18"/>
        <end position="300"/>
    </location>
</feature>
<feature type="domain" description="Follistatin-like">
    <location>
        <begin position="68"/>
        <end position="90"/>
    </location>
</feature>
<feature type="domain" description="Kazal-like" evidence="3">
    <location>
        <begin position="86"/>
        <end position="148"/>
    </location>
</feature>
<feature type="domain" description="EF-hand">
    <location>
        <begin position="258"/>
        <end position="293"/>
    </location>
</feature>
<feature type="binding site" evidence="4">
    <location>
        <position position="271"/>
    </location>
    <ligand>
        <name>Ca(2+)</name>
        <dbReference type="ChEBI" id="CHEBI:29108"/>
    </ligand>
</feature>
<feature type="binding site" evidence="4">
    <location>
        <position position="273"/>
    </location>
    <ligand>
        <name>Ca(2+)</name>
        <dbReference type="ChEBI" id="CHEBI:29108"/>
    </ligand>
</feature>
<feature type="binding site" evidence="4">
    <location>
        <position position="275"/>
    </location>
    <ligand>
        <name>Ca(2+)</name>
        <dbReference type="ChEBI" id="CHEBI:29108"/>
    </ligand>
</feature>
<feature type="binding site" evidence="4">
    <location>
        <position position="277"/>
    </location>
    <ligand>
        <name>Ca(2+)</name>
        <dbReference type="ChEBI" id="CHEBI:29108"/>
    </ligand>
</feature>
<feature type="binding site" evidence="4">
    <location>
        <position position="282"/>
    </location>
    <ligand>
        <name>Ca(2+)</name>
        <dbReference type="ChEBI" id="CHEBI:29108"/>
    </ligand>
</feature>
<feature type="glycosylation site" description="N-linked (GlcNAc...) asparagine" evidence="2">
    <location>
        <position position="113"/>
    </location>
</feature>
<feature type="disulfide bond" evidence="3">
    <location>
        <begin position="69"/>
        <end position="80"/>
    </location>
</feature>
<feature type="disulfide bond" evidence="3">
    <location>
        <begin position="74"/>
        <end position="90"/>
    </location>
</feature>
<feature type="disulfide bond" evidence="3">
    <location>
        <begin position="92"/>
        <end position="127"/>
    </location>
</feature>
<feature type="disulfide bond" evidence="3">
    <location>
        <begin position="98"/>
        <end position="120"/>
    </location>
</feature>
<feature type="disulfide bond" evidence="3">
    <location>
        <begin position="109"/>
        <end position="146"/>
    </location>
</feature>
<feature type="disulfide bond" evidence="3">
    <location>
        <begin position="152"/>
        <end position="262"/>
    </location>
</feature>
<feature type="disulfide bond" evidence="3">
    <location>
        <begin position="270"/>
        <end position="286"/>
    </location>
</feature>
<evidence type="ECO:0000250" key="1"/>
<evidence type="ECO:0000255" key="2"/>
<evidence type="ECO:0000255" key="3">
    <source>
        <dbReference type="PROSITE-ProRule" id="PRU00798"/>
    </source>
</evidence>
<evidence type="ECO:0000255" key="4">
    <source>
        <dbReference type="PROSITE-ProRule" id="PRU10142"/>
    </source>
</evidence>
<evidence type="ECO:0000269" key="5">
    <source>
    </source>
</evidence>
<evidence type="ECO:0000305" key="6"/>
<proteinExistence type="evidence at protein level"/>
<accession>P36378</accession>
<keyword id="KW-0084">Basement membrane</keyword>
<keyword id="KW-0106">Calcium</keyword>
<keyword id="KW-0186">Copper</keyword>
<keyword id="KW-1015">Disulfide bond</keyword>
<keyword id="KW-0272">Extracellular matrix</keyword>
<keyword id="KW-0325">Glycoprotein</keyword>
<keyword id="KW-0479">Metal-binding</keyword>
<keyword id="KW-1185">Reference proteome</keyword>
<keyword id="KW-0964">Secreted</keyword>
<keyword id="KW-0732">Signal</keyword>
<name>SPRC_XENLA</name>
<organism>
    <name type="scientific">Xenopus laevis</name>
    <name type="common">African clawed frog</name>
    <dbReference type="NCBI Taxonomy" id="8355"/>
    <lineage>
        <taxon>Eukaryota</taxon>
        <taxon>Metazoa</taxon>
        <taxon>Chordata</taxon>
        <taxon>Craniata</taxon>
        <taxon>Vertebrata</taxon>
        <taxon>Euteleostomi</taxon>
        <taxon>Amphibia</taxon>
        <taxon>Batrachia</taxon>
        <taxon>Anura</taxon>
        <taxon>Pipoidea</taxon>
        <taxon>Pipidae</taxon>
        <taxon>Xenopodinae</taxon>
        <taxon>Xenopus</taxon>
        <taxon>Xenopus</taxon>
    </lineage>
</organism>
<dbReference type="EMBL" id="X62483">
    <property type="protein sequence ID" value="CAA44350.1"/>
    <property type="molecule type" value="mRNA"/>
</dbReference>
<dbReference type="PIR" id="S18992">
    <property type="entry name" value="S18992"/>
</dbReference>
<dbReference type="SMR" id="P36378"/>
<dbReference type="GlyCosmos" id="P36378">
    <property type="glycosylation" value="1 site, No reported glycans"/>
</dbReference>
<dbReference type="AGR" id="Xenbase:XB-GENE-17342256"/>
<dbReference type="Xenbase" id="XB-GENE-17342256">
    <property type="gene designation" value="sparc.L"/>
</dbReference>
<dbReference type="Proteomes" id="UP000186698">
    <property type="component" value="Unplaced"/>
</dbReference>
<dbReference type="GO" id="GO:0005604">
    <property type="term" value="C:basement membrane"/>
    <property type="evidence" value="ECO:0007669"/>
    <property type="project" value="UniProtKB-SubCell"/>
</dbReference>
<dbReference type="GO" id="GO:0005615">
    <property type="term" value="C:extracellular space"/>
    <property type="evidence" value="ECO:0000318"/>
    <property type="project" value="GO_Central"/>
</dbReference>
<dbReference type="GO" id="GO:0005509">
    <property type="term" value="F:calcium ion binding"/>
    <property type="evidence" value="ECO:0000318"/>
    <property type="project" value="GO_Central"/>
</dbReference>
<dbReference type="GO" id="GO:0005518">
    <property type="term" value="F:collagen binding"/>
    <property type="evidence" value="ECO:0000318"/>
    <property type="project" value="GO_Central"/>
</dbReference>
<dbReference type="GO" id="GO:0050840">
    <property type="term" value="F:extracellular matrix binding"/>
    <property type="evidence" value="ECO:0000318"/>
    <property type="project" value="GO_Central"/>
</dbReference>
<dbReference type="GO" id="GO:0050807">
    <property type="term" value="P:regulation of synapse organization"/>
    <property type="evidence" value="ECO:0000318"/>
    <property type="project" value="GO_Central"/>
</dbReference>
<dbReference type="GO" id="GO:0048752">
    <property type="term" value="P:semicircular canal morphogenesis"/>
    <property type="evidence" value="ECO:0000318"/>
    <property type="project" value="GO_Central"/>
</dbReference>
<dbReference type="CDD" id="cd16235">
    <property type="entry name" value="EFh_SPARC_SPARC"/>
    <property type="match status" value="1"/>
</dbReference>
<dbReference type="CDD" id="cd01328">
    <property type="entry name" value="FSL_SPARC"/>
    <property type="match status" value="1"/>
</dbReference>
<dbReference type="FunFam" id="1.10.238.10:FF:000068">
    <property type="entry name" value="SPARC isoform 1"/>
    <property type="match status" value="1"/>
</dbReference>
<dbReference type="FunFam" id="3.30.60.30:FF:000004">
    <property type="entry name" value="SPARC isoform 1"/>
    <property type="match status" value="1"/>
</dbReference>
<dbReference type="Gene3D" id="3.30.60.30">
    <property type="match status" value="1"/>
</dbReference>
<dbReference type="Gene3D" id="1.10.238.10">
    <property type="entry name" value="EF-hand"/>
    <property type="match status" value="1"/>
</dbReference>
<dbReference type="InterPro" id="IPR011992">
    <property type="entry name" value="EF-hand-dom_pair"/>
</dbReference>
<dbReference type="InterPro" id="IPR018247">
    <property type="entry name" value="EF_Hand_1_Ca_BS"/>
</dbReference>
<dbReference type="InterPro" id="IPR003645">
    <property type="entry name" value="Fol_N"/>
</dbReference>
<dbReference type="InterPro" id="IPR015369">
    <property type="entry name" value="Follistatin/Osteonectin_EGF"/>
</dbReference>
<dbReference type="InterPro" id="IPR002350">
    <property type="entry name" value="Kazal_dom"/>
</dbReference>
<dbReference type="InterPro" id="IPR036058">
    <property type="entry name" value="Kazal_dom_sf"/>
</dbReference>
<dbReference type="InterPro" id="IPR001999">
    <property type="entry name" value="Osteonectin_CS"/>
</dbReference>
<dbReference type="InterPro" id="IPR019577">
    <property type="entry name" value="SPARC/Testican_Ca-bd-dom"/>
</dbReference>
<dbReference type="InterPro" id="IPR037641">
    <property type="entry name" value="SPARC_FS"/>
</dbReference>
<dbReference type="PANTHER" id="PTHR13866:SF14">
    <property type="entry name" value="BM-40"/>
    <property type="match status" value="1"/>
</dbReference>
<dbReference type="PANTHER" id="PTHR13866">
    <property type="entry name" value="SPARC OSTEONECTIN"/>
    <property type="match status" value="1"/>
</dbReference>
<dbReference type="Pfam" id="PF09289">
    <property type="entry name" value="FOLN"/>
    <property type="match status" value="1"/>
</dbReference>
<dbReference type="Pfam" id="PF00050">
    <property type="entry name" value="Kazal_1"/>
    <property type="match status" value="1"/>
</dbReference>
<dbReference type="Pfam" id="PF10591">
    <property type="entry name" value="SPARC_Ca_bdg"/>
    <property type="match status" value="1"/>
</dbReference>
<dbReference type="SMART" id="SM00274">
    <property type="entry name" value="FOLN"/>
    <property type="match status" value="1"/>
</dbReference>
<dbReference type="SMART" id="SM00280">
    <property type="entry name" value="KAZAL"/>
    <property type="match status" value="1"/>
</dbReference>
<dbReference type="SUPFAM" id="SSF47473">
    <property type="entry name" value="EF-hand"/>
    <property type="match status" value="1"/>
</dbReference>
<dbReference type="SUPFAM" id="SSF57196">
    <property type="entry name" value="EGF/Laminin"/>
    <property type="match status" value="1"/>
</dbReference>
<dbReference type="SUPFAM" id="SSF100895">
    <property type="entry name" value="Kazal-type serine protease inhibitors"/>
    <property type="match status" value="1"/>
</dbReference>
<dbReference type="PROSITE" id="PS00018">
    <property type="entry name" value="EF_HAND_1"/>
    <property type="match status" value="1"/>
</dbReference>
<dbReference type="PROSITE" id="PS51465">
    <property type="entry name" value="KAZAL_2"/>
    <property type="match status" value="1"/>
</dbReference>
<dbReference type="PROSITE" id="PS00612">
    <property type="entry name" value="OSTEONECTIN_1"/>
    <property type="match status" value="1"/>
</dbReference>
<dbReference type="PROSITE" id="PS00613">
    <property type="entry name" value="OSTEONECTIN_2"/>
    <property type="match status" value="1"/>
</dbReference>
<comment type="function">
    <text evidence="1">Appears to regulate cell growth through interactions with the extracellular matrix and cytokines. Binds calcium and copper, several types of collagen, albumin, thrombospondin, PDGF and cell membranes. There are two calcium binding sites; an acidic domain that binds 5 to 8 Ca(2+) with a low affinity and an EF-hand loop that binds a Ca(2+) ion with a high affinity (By similarity).</text>
</comment>
<comment type="subcellular location">
    <subcellularLocation>
        <location evidence="5">Secreted</location>
        <location evidence="5">Extracellular space</location>
        <location evidence="5">Extracellular matrix</location>
        <location evidence="5">Basement membrane</location>
    </subcellularLocation>
    <text evidence="1">In or around the basement membrane.</text>
</comment>
<comment type="tissue specificity">
    <text evidence="5">Detected in long bone (at protein level).</text>
</comment>
<comment type="similarity">
    <text evidence="6">Belongs to the SPARC family.</text>
</comment>
<reference key="1">
    <citation type="journal article" date="1992" name="Biochem. J.">
        <title>Molecular analysis of Xenopus laevis SPARC (Secreted Protein, Acidic, Rich in Cysteine). A highly conserved acidic calcium-binding extracellular-matrix protein.</title>
        <authorList>
            <person name="Damjanovski S."/>
            <person name="Liu F."/>
            <person name="Ringuette M.J."/>
        </authorList>
    </citation>
    <scope>NUCLEOTIDE SEQUENCE [MRNA]</scope>
    <scope>SUBCELLULAR LOCATION</scope>
    <scope>TISSUE SPECIFICITY</scope>
</reference>